<gene>
    <name evidence="1" type="primary">pqqB</name>
    <name type="ordered locus">ABAYE1881</name>
</gene>
<proteinExistence type="inferred from homology"/>
<comment type="function">
    <text evidence="1">May be involved in the transport of PQQ or its precursor to the periplasm.</text>
</comment>
<comment type="pathway">
    <text evidence="1">Cofactor biosynthesis; pyrroloquinoline quinone biosynthesis.</text>
</comment>
<comment type="similarity">
    <text evidence="1">Belongs to the PqqB family.</text>
</comment>
<reference key="1">
    <citation type="journal article" date="2008" name="PLoS ONE">
        <title>Comparative analysis of Acinetobacters: three genomes for three lifestyles.</title>
        <authorList>
            <person name="Vallenet D."/>
            <person name="Nordmann P."/>
            <person name="Barbe V."/>
            <person name="Poirel L."/>
            <person name="Mangenot S."/>
            <person name="Bataille E."/>
            <person name="Dossat C."/>
            <person name="Gas S."/>
            <person name="Kreimeyer A."/>
            <person name="Lenoble P."/>
            <person name="Oztas S."/>
            <person name="Poulain J."/>
            <person name="Segurens B."/>
            <person name="Robert C."/>
            <person name="Abergel C."/>
            <person name="Claverie J.-M."/>
            <person name="Raoult D."/>
            <person name="Medigue C."/>
            <person name="Weissenbach J."/>
            <person name="Cruveiller S."/>
        </authorList>
    </citation>
    <scope>NUCLEOTIDE SEQUENCE [LARGE SCALE GENOMIC DNA]</scope>
    <source>
        <strain>AYE</strain>
    </source>
</reference>
<name>PQQB_ACIBY</name>
<organism>
    <name type="scientific">Acinetobacter baumannii (strain AYE)</name>
    <dbReference type="NCBI Taxonomy" id="509173"/>
    <lineage>
        <taxon>Bacteria</taxon>
        <taxon>Pseudomonadati</taxon>
        <taxon>Pseudomonadota</taxon>
        <taxon>Gammaproteobacteria</taxon>
        <taxon>Moraxellales</taxon>
        <taxon>Moraxellaceae</taxon>
        <taxon>Acinetobacter</taxon>
        <taxon>Acinetobacter calcoaceticus/baumannii complex</taxon>
    </lineage>
</organism>
<evidence type="ECO:0000255" key="1">
    <source>
        <dbReference type="HAMAP-Rule" id="MF_00653"/>
    </source>
</evidence>
<protein>
    <recommendedName>
        <fullName evidence="1">Coenzyme PQQ synthesis protein B</fullName>
    </recommendedName>
    <alternativeName>
        <fullName evidence="1">Pyrroloquinoline quinone biosynthesis protein B</fullName>
    </alternativeName>
</protein>
<feature type="chain" id="PRO_1000131159" description="Coenzyme PQQ synthesis protein B">
    <location>
        <begin position="1"/>
        <end position="303"/>
    </location>
</feature>
<accession>B0V497</accession>
<dbReference type="EMBL" id="CU459141">
    <property type="protein sequence ID" value="CAM86763.1"/>
    <property type="molecule type" value="Genomic_DNA"/>
</dbReference>
<dbReference type="RefSeq" id="WP_000548468.1">
    <property type="nucleotide sequence ID" value="NZ_JBDGFB010000001.1"/>
</dbReference>
<dbReference type="SMR" id="B0V497"/>
<dbReference type="EnsemblBacteria" id="CAM86763">
    <property type="protein sequence ID" value="CAM86763"/>
    <property type="gene ID" value="ABAYE1881"/>
</dbReference>
<dbReference type="KEGG" id="aby:ABAYE1881"/>
<dbReference type="HOGENOM" id="CLU_061120_0_0_6"/>
<dbReference type="UniPathway" id="UPA00539"/>
<dbReference type="GO" id="GO:0018189">
    <property type="term" value="P:pyrroloquinoline quinone biosynthetic process"/>
    <property type="evidence" value="ECO:0007669"/>
    <property type="project" value="UniProtKB-UniRule"/>
</dbReference>
<dbReference type="CDD" id="cd16274">
    <property type="entry name" value="PQQB-like_MBL-fold"/>
    <property type="match status" value="1"/>
</dbReference>
<dbReference type="Gene3D" id="3.60.15.10">
    <property type="entry name" value="Ribonuclease Z/Hydroxyacylglutathione hydrolase-like"/>
    <property type="match status" value="1"/>
</dbReference>
<dbReference type="HAMAP" id="MF_00653">
    <property type="entry name" value="PQQ_syn_PqqB"/>
    <property type="match status" value="1"/>
</dbReference>
<dbReference type="InterPro" id="IPR001279">
    <property type="entry name" value="Metallo-B-lactamas"/>
</dbReference>
<dbReference type="InterPro" id="IPR011842">
    <property type="entry name" value="PQQ_synth_PqqB"/>
</dbReference>
<dbReference type="InterPro" id="IPR036866">
    <property type="entry name" value="RibonucZ/Hydroxyglut_hydro"/>
</dbReference>
<dbReference type="NCBIfam" id="TIGR02108">
    <property type="entry name" value="PQQ_syn_pqqB"/>
    <property type="match status" value="1"/>
</dbReference>
<dbReference type="PANTHER" id="PTHR42663:SF7">
    <property type="entry name" value="COENZYME PQQ SYNTHESIS PROTEIN B"/>
    <property type="match status" value="1"/>
</dbReference>
<dbReference type="PANTHER" id="PTHR42663">
    <property type="entry name" value="HYDROLASE C777.06C-RELATED-RELATED"/>
    <property type="match status" value="1"/>
</dbReference>
<dbReference type="Pfam" id="PF12706">
    <property type="entry name" value="Lactamase_B_2"/>
    <property type="match status" value="1"/>
</dbReference>
<dbReference type="SUPFAM" id="SSF56281">
    <property type="entry name" value="Metallo-hydrolase/oxidoreductase"/>
    <property type="match status" value="1"/>
</dbReference>
<sequence length="303" mass="33764">MHIYILGSAAGGGFPQWNCNCPNCHGVRTGTINAKVRTQSSIAISENGVDWILLNASPDIRQQLFDFKAAQPARKLRDTGITNVILMDSQLDHTTGLLTLREGCPINVWCTEMVYQDLTTGFPVFNMLKHWNGGLQYHQIDPKQAFKIDGFENLEFLPLIIQSAAPPYSPHRHDPHEGDNIALIIKDHKTQKQLFYAPGLGKIDDQIMQIMQDSDCVMIDGTLWTDDEMQQTGVGKKTGREMGHLYISGEGGSLSYLNQLSTPKKVLIHINNTNPILNEDSAQFAELKANDVEVAFDGMQIEL</sequence>
<keyword id="KW-0884">PQQ biosynthesis</keyword>
<keyword id="KW-0813">Transport</keyword>